<name>PB2_I02A6</name>
<comment type="function">
    <text evidence="1">Plays an essential role in transcription initiation and cap-stealing mechanism, in which cellular capped pre-mRNAs are used to generate primers for viral transcription. Recognizes and binds the 7-methylguanosine-containing cap of the target pre-RNA which is subsequently cleaved after 10-13 nucleotides by the viral protein PA. Plays a role in the initiation of the viral genome replication and modulates the activity of the ribonucleoprotein (RNP) complex.</text>
</comment>
<comment type="subunit">
    <text evidence="1">Influenza RNA polymerase is composed of three subunits: PB1, PB2 and PA. Interacts (via N-terminus) with PB1 (via C-terminus). Interacts with nucleoprotein NP (via N-terminus).</text>
</comment>
<comment type="subcellular location">
    <subcellularLocation>
        <location evidence="1">Virion</location>
    </subcellularLocation>
    <subcellularLocation>
        <location evidence="1">Host nucleus</location>
    </subcellularLocation>
</comment>
<comment type="similarity">
    <text evidence="1">Belongs to the influenza viruses PB2 family.</text>
</comment>
<reference key="1">
    <citation type="journal article" date="2004" name="Nature">
        <title>Genesis of a highly pathogenic and potentially pandemic H5N1 influenza virus in eastern Asia.</title>
        <authorList>
            <person name="Li K.S."/>
            <person name="Guan Y."/>
            <person name="Wang J."/>
            <person name="Smith G.J.D."/>
            <person name="Xu K.M."/>
            <person name="Duan L."/>
            <person name="Rahardjo A.P."/>
            <person name="Puthavathana P."/>
            <person name="Buranathai C."/>
            <person name="Nguyen T.D."/>
            <person name="Estoepangestie A.T.S."/>
            <person name="Chaisingh A."/>
            <person name="Auewarakul P."/>
            <person name="Long H.T."/>
            <person name="Hanh N.T.H."/>
            <person name="Webby R.J."/>
            <person name="Poon L.L.M."/>
            <person name="Chen H."/>
            <person name="Shortridge K.F."/>
            <person name="Yuen K.Y."/>
            <person name="Webster R.G."/>
            <person name="Peiris J.S.M."/>
        </authorList>
    </citation>
    <scope>NUCLEOTIDE SEQUENCE [GENOMIC RNA]</scope>
</reference>
<reference key="2">
    <citation type="submission" date="2008-03" db="EMBL/GenBank/DDBJ databases">
        <authorList>
            <person name="Li K.S."/>
            <person name="Guan Y."/>
            <person name="Wang J."/>
            <person name="Smith G.J.D."/>
            <person name="Xu K.M."/>
            <person name="Duan L."/>
            <person name="Rahardjo A.P."/>
            <person name="Puthavathana P."/>
            <person name="Buranathai C."/>
            <person name="Nguyen T.D."/>
            <person name="Estoepangestie A.T.S."/>
            <person name="Chaisingh A."/>
            <person name="Auewarakul P."/>
            <person name="Long H.T."/>
            <person name="Hanh N.T.H."/>
            <person name="Lim W."/>
            <person name="Webby R.J."/>
            <person name="Poon L.L.M."/>
            <person name="Chen H."/>
            <person name="Shortridge K.F."/>
            <person name="Yuen K.Y."/>
            <person name="Webster R.G."/>
            <person name="Peiris J.S.M."/>
        </authorList>
    </citation>
    <scope>SEQUENCE REVISION</scope>
</reference>
<organism>
    <name type="scientific">Influenza A virus (strain A/Chicken/Hong Kong/YU22/2002 H5N1 genotype Z)</name>
    <dbReference type="NCBI Taxonomy" id="284177"/>
    <lineage>
        <taxon>Viruses</taxon>
        <taxon>Riboviria</taxon>
        <taxon>Orthornavirae</taxon>
        <taxon>Negarnaviricota</taxon>
        <taxon>Polyploviricotina</taxon>
        <taxon>Insthoviricetes</taxon>
        <taxon>Articulavirales</taxon>
        <taxon>Orthomyxoviridae</taxon>
        <taxon>Alphainfluenzavirus</taxon>
        <taxon>Alphainfluenzavirus influenzae</taxon>
        <taxon>Influenza A virus</taxon>
    </lineage>
</organism>
<protein>
    <recommendedName>
        <fullName evidence="1">Polymerase basic protein 2</fullName>
    </recommendedName>
    <alternativeName>
        <fullName evidence="1">RNA-directed RNA polymerase subunit P3</fullName>
    </alternativeName>
</protein>
<gene>
    <name evidence="1" type="primary">PB2</name>
</gene>
<dbReference type="EMBL" id="AY651734">
    <property type="protein sequence ID" value="AAT73565.2"/>
    <property type="molecule type" value="Genomic_RNA"/>
</dbReference>
<dbReference type="PDB" id="5EG9">
    <property type="method" value="X-ray"/>
    <property type="resolution" value="2.30 A"/>
    <property type="chains" value="A/B=318-420, A/B=428-483"/>
</dbReference>
<dbReference type="PDB" id="9I2O">
    <property type="method" value="X-ray"/>
    <property type="resolution" value="1.72 A"/>
    <property type="chains" value="A=318-483"/>
</dbReference>
<dbReference type="PDBsum" id="5EG9"/>
<dbReference type="PDBsum" id="9I2O"/>
<dbReference type="SMR" id="Q6DNL8"/>
<dbReference type="GO" id="GO:0042025">
    <property type="term" value="C:host cell nucleus"/>
    <property type="evidence" value="ECO:0007669"/>
    <property type="project" value="UniProtKB-SubCell"/>
</dbReference>
<dbReference type="GO" id="GO:0044423">
    <property type="term" value="C:virion component"/>
    <property type="evidence" value="ECO:0007669"/>
    <property type="project" value="UniProtKB-UniRule"/>
</dbReference>
<dbReference type="GO" id="GO:0003723">
    <property type="term" value="F:RNA binding"/>
    <property type="evidence" value="ECO:0007669"/>
    <property type="project" value="UniProtKB-UniRule"/>
</dbReference>
<dbReference type="GO" id="GO:0003968">
    <property type="term" value="F:RNA-directed RNA polymerase activity"/>
    <property type="evidence" value="ECO:0007669"/>
    <property type="project" value="UniProtKB-UniRule"/>
</dbReference>
<dbReference type="GO" id="GO:0006370">
    <property type="term" value="P:7-methylguanosine mRNA capping"/>
    <property type="evidence" value="ECO:0007669"/>
    <property type="project" value="UniProtKB-UniRule"/>
</dbReference>
<dbReference type="GO" id="GO:0075526">
    <property type="term" value="P:cap snatching"/>
    <property type="evidence" value="ECO:0007669"/>
    <property type="project" value="UniProtKB-UniRule"/>
</dbReference>
<dbReference type="GO" id="GO:0006351">
    <property type="term" value="P:DNA-templated transcription"/>
    <property type="evidence" value="ECO:0007669"/>
    <property type="project" value="UniProtKB-UniRule"/>
</dbReference>
<dbReference type="GO" id="GO:0039657">
    <property type="term" value="P:symbiont-mediated suppression of host gene expression"/>
    <property type="evidence" value="ECO:0007669"/>
    <property type="project" value="UniProtKB-KW"/>
</dbReference>
<dbReference type="GO" id="GO:0039523">
    <property type="term" value="P:symbiont-mediated suppression of host mRNA transcription via inhibition of RNA polymerase II activity"/>
    <property type="evidence" value="ECO:0007669"/>
    <property type="project" value="UniProtKB-UniRule"/>
</dbReference>
<dbReference type="GO" id="GO:0039694">
    <property type="term" value="P:viral RNA genome replication"/>
    <property type="evidence" value="ECO:0007669"/>
    <property type="project" value="InterPro"/>
</dbReference>
<dbReference type="FunFam" id="3.30.30.90:FF:000001">
    <property type="entry name" value="Polymerase basic protein 2"/>
    <property type="match status" value="1"/>
</dbReference>
<dbReference type="Gene3D" id="3.30.30.90">
    <property type="entry name" value="Polymerase Basic Protein 2, C-terminal domain"/>
    <property type="match status" value="1"/>
</dbReference>
<dbReference type="HAMAP" id="MF_04062">
    <property type="entry name" value="INV_PB2"/>
    <property type="match status" value="1"/>
</dbReference>
<dbReference type="InterPro" id="IPR049110">
    <property type="entry name" value="Flu_PB2_2nd"/>
</dbReference>
<dbReference type="InterPro" id="IPR049114">
    <property type="entry name" value="Flu_PB2_6th"/>
</dbReference>
<dbReference type="InterPro" id="IPR049115">
    <property type="entry name" value="Flu_PB2_C"/>
</dbReference>
<dbReference type="InterPro" id="IPR048298">
    <property type="entry name" value="Flu_PB2_CAP-bd"/>
</dbReference>
<dbReference type="InterPro" id="IPR049111">
    <property type="entry name" value="Flu_PB2_middle"/>
</dbReference>
<dbReference type="InterPro" id="IPR049106">
    <property type="entry name" value="Flu_PB2_N"/>
</dbReference>
<dbReference type="InterPro" id="IPR001591">
    <property type="entry name" value="INV_PB2"/>
</dbReference>
<dbReference type="InterPro" id="IPR049113">
    <property type="entry name" value="PB2_helical"/>
</dbReference>
<dbReference type="InterPro" id="IPR037258">
    <property type="entry name" value="PDB2_C"/>
</dbReference>
<dbReference type="Pfam" id="PF20947">
    <property type="entry name" value="Flu_PB2_1st"/>
    <property type="match status" value="1"/>
</dbReference>
<dbReference type="Pfam" id="PF20948">
    <property type="entry name" value="Flu_PB2_2nd"/>
    <property type="match status" value="1"/>
</dbReference>
<dbReference type="Pfam" id="PF20949">
    <property type="entry name" value="Flu_PB2_3rd"/>
    <property type="match status" value="1"/>
</dbReference>
<dbReference type="Pfam" id="PF20950">
    <property type="entry name" value="Flu_PB2_4th"/>
    <property type="match status" value="1"/>
</dbReference>
<dbReference type="Pfam" id="PF00604">
    <property type="entry name" value="Flu_PB2_5th"/>
    <property type="match status" value="1"/>
</dbReference>
<dbReference type="Pfam" id="PF20951">
    <property type="entry name" value="Flu_PB2_6th"/>
    <property type="match status" value="1"/>
</dbReference>
<dbReference type="Pfam" id="PF20952">
    <property type="entry name" value="Flu_PB2_7th"/>
    <property type="match status" value="1"/>
</dbReference>
<dbReference type="SUPFAM" id="SSF160453">
    <property type="entry name" value="PB2 C-terminal domain-like"/>
    <property type="match status" value="1"/>
</dbReference>
<sequence>MERIKELRDLMSQSRTREILTKTTVDHMAIIKKYTSGRQEKNPALRMKWMMAMKYPITADKRIIEMIPERNEQGQTLWSKTNDAGSDRVMVSPLAVTWWNRNGPTTSAVHYPKVYKTYFEKVERLKHGTFGPVHFRNQVKIRRRVDINPGHADLSAKEAQDVIMEVVFPNEVGARILTSESQLTITKEKKEELQDCKIAPLMVAYMLERELVRKTRFLPVAGGTSSVYIEVLHLTQGTCWEQMYTPGGEVRNDDVDQSLIIAARNIVRRATVSADPLASLLEMCHSTQIGGIRMVDILRQNPTEEQAVDICKAAMGLRISSSFSFGGFTFKRTSGSSVKKEEEVLTGNLQTLKIRVHEGYEEFTMVGRRATAILRKATRRLIQLIVSGRDEQSIAEAIIVAMVFSQEDCMIKAVRGDLNFVNRANQRLNPMHQLLRHFQKDAKVLFQNWGIEPIDNVMGMIGILPDMTPSTEMSLRGVRVSKMGVDEYSSTERVVVSIDRFLRVRDQRGNVLLSPEEVSETQGTEKLTITYSSSMMWEINGPESVLVNTYQWIIRNWETVKIQWSQDPTMLYNKMEFEPFQSLVPKAARGQYSGFVRTLFQQMRDVLGTFDTVQIIKLLPFAAAPPEQSRMQFSSLTVNVRGSGMRILVRGNSPVFNYNKATKRLTVLGKDAGALTEDPDEGTAGVESAVLRGFLILGKEDKRYGPALSINELSNLAKGEKANVLIGQGDVVLVMKRKRDSSILTDSQTATKRIRMAIN</sequence>
<feature type="chain" id="PRO_0000311153" description="Polymerase basic protein 2">
    <location>
        <begin position="1"/>
        <end position="759"/>
    </location>
</feature>
<feature type="short sequence motif" description="Nuclear localization signal" evidence="1">
    <location>
        <begin position="736"/>
        <end position="739"/>
    </location>
</feature>
<feature type="site" description="Avian adaptation" evidence="1">
    <location>
        <position position="627"/>
    </location>
</feature>
<feature type="strand" evidence="2">
    <location>
        <begin position="323"/>
        <end position="325"/>
    </location>
</feature>
<feature type="strand" evidence="2">
    <location>
        <begin position="328"/>
        <end position="335"/>
    </location>
</feature>
<feature type="strand" evidence="2">
    <location>
        <begin position="338"/>
        <end position="345"/>
    </location>
</feature>
<feature type="strand" evidence="2">
    <location>
        <begin position="351"/>
        <end position="359"/>
    </location>
</feature>
<feature type="strand" evidence="2">
    <location>
        <begin position="361"/>
        <end position="366"/>
    </location>
</feature>
<feature type="strand" evidence="2">
    <location>
        <begin position="368"/>
        <end position="377"/>
    </location>
</feature>
<feature type="strand" evidence="2">
    <location>
        <begin position="380"/>
        <end position="390"/>
    </location>
</feature>
<feature type="helix" evidence="2">
    <location>
        <begin position="391"/>
        <end position="405"/>
    </location>
</feature>
<feature type="helix" evidence="2">
    <location>
        <begin position="408"/>
        <end position="411"/>
    </location>
</feature>
<feature type="helix" evidence="2">
    <location>
        <begin position="430"/>
        <end position="440"/>
    </location>
</feature>
<feature type="helix" evidence="2">
    <location>
        <begin position="443"/>
        <end position="449"/>
    </location>
</feature>
<feature type="strand" evidence="2">
    <location>
        <begin position="451"/>
        <end position="453"/>
    </location>
</feature>
<feature type="strand" evidence="2">
    <location>
        <begin position="461"/>
        <end position="463"/>
    </location>
</feature>
<feature type="strand" evidence="2">
    <location>
        <begin position="469"/>
        <end position="475"/>
    </location>
</feature>
<feature type="strand" evidence="2">
    <location>
        <begin position="478"/>
        <end position="480"/>
    </location>
</feature>
<organismHost>
    <name type="scientific">Aves</name>
    <dbReference type="NCBI Taxonomy" id="8782"/>
</organismHost>
<organismHost>
    <name type="scientific">Felis catus</name>
    <name type="common">Cat</name>
    <name type="synonym">Felis silvestris catus</name>
    <dbReference type="NCBI Taxonomy" id="9685"/>
</organismHost>
<organismHost>
    <name type="scientific">Homo sapiens</name>
    <name type="common">Human</name>
    <dbReference type="NCBI Taxonomy" id="9606"/>
</organismHost>
<organismHost>
    <name type="scientific">Panthera pardus</name>
    <name type="common">Leopard</name>
    <name type="synonym">Felis pardus</name>
    <dbReference type="NCBI Taxonomy" id="9691"/>
</organismHost>
<organismHost>
    <name type="scientific">Panthera tigris</name>
    <name type="common">Tiger</name>
    <dbReference type="NCBI Taxonomy" id="9694"/>
</organismHost>
<organismHost>
    <name type="scientific">Sus scrofa</name>
    <name type="common">Pig</name>
    <dbReference type="NCBI Taxonomy" id="9823"/>
</organismHost>
<accession>Q6DNL8</accession>
<proteinExistence type="evidence at protein level"/>
<keyword id="KW-0002">3D-structure</keyword>
<keyword id="KW-1157">Cap snatching</keyword>
<keyword id="KW-1262">Eukaryotic host gene expression shutoff by virus</keyword>
<keyword id="KW-1191">Eukaryotic host transcription shutoff by virus</keyword>
<keyword id="KW-1190">Host gene expression shutoff by virus</keyword>
<keyword id="KW-1048">Host nucleus</keyword>
<keyword id="KW-0945">Host-virus interaction</keyword>
<keyword id="KW-1104">Inhibition of host RNA polymerase II by virus</keyword>
<keyword id="KW-0506">mRNA capping</keyword>
<keyword id="KW-0507">mRNA processing</keyword>
<keyword id="KW-1195">Viral transcription</keyword>
<keyword id="KW-0946">Virion</keyword>
<evidence type="ECO:0000255" key="1">
    <source>
        <dbReference type="HAMAP-Rule" id="MF_04062"/>
    </source>
</evidence>
<evidence type="ECO:0007829" key="2">
    <source>
        <dbReference type="PDB" id="5EG9"/>
    </source>
</evidence>